<protein>
    <recommendedName>
        <fullName>DASH complex subunit ASK1</fullName>
    </recommendedName>
    <alternativeName>
        <fullName>Associated with spindles and kinetochores protein 1</fullName>
    </alternativeName>
    <alternativeName>
        <fullName>Outer kinetochore protein ASK1</fullName>
    </alternativeName>
</protein>
<comment type="function">
    <text evidence="3 4 7 8 9 11 12 13 14 15 17 18">Component of the DASH complex that connects microtubules with kinetochores and couples microtubule depolymerisation to chromosome movement; it is involved in retrieving kinetochores to the spindle poles before their re-orientation on the spindle in early mitosis and allows microtubule depolymerization to pull chromosomes apart and resist detachment during anaphase (PubMed:15664196, PubMed:16415853, PubMed:16777964, PubMed:17460120, PubMed:17643123, PubMed:18079178). Kinetochores, consisting of a centromere-associated inner segment and a microtubule-contacting outer segment, play a crucial role in chromosome segregation by mediating the physical connection between centromeric DNA and microtubules (PubMed:11782438). Kinetochores also serve as an input point for the spindle assembly checkpoint, which delays anaphase until all chromosomes have bioriented on the mitotic spindle (PubMed:11782438, PubMed:12408861). During spindle-kinetochore attachment, kinetochores first attach to the lateral surface of spindle microtubules, which supports the congression of chromosomes toward the middle of the dividing cell; they then slide along towards the spindle pole, a process independent of the DASH complex but requiring the NDC80 complex (PubMed:17620411). When the end of a disassembling microtubule reaches the laterally attached kinetochore, the DASH complex together with the NDC80 complex and STU2 convert lateral attachment to end-on capture to produce a structure that can track with microtubule shortening and sustain attachment when tension is applied across sister kinetochores upon their biorientation (PubMed:15640796, PubMed:15664196, PubMed:17620411, PubMed:18079178, PubMed:25236177). Microtubule depolymerization proceeds by protofilament splaying and induces the kinetochore-attached DASH complex to slide longitudinally, thereby helping to transduce depolymerization energy into pulling forces to disjoin chromatids (PubMed:16415853, PubMed:16777964, PubMed:17620411). Incorrect microtubule attachments are corrected by releasing microubules from the kinetochore through phosphorylation by IPL1 of kinetochore components (PubMed:12408861). Links the microtubule cytoskeleton to chromosomes during interphase (PubMed:36701236). Also contributes to the poleward transport of kinetochores on microtubules following centromeric DNA replication in S-phase (PubMed:18079178).</text>
</comment>
<comment type="subunit">
    <text evidence="1 3 7 10 12 14 16 17">Component of the DASH complex consisting of ASK1, DAD1, DAD2, DAD3, DAD4, DAM1, DUO1, HSK3, SPC19 and SPC34, with a stoichiometry of one copy of each subunit per complex (PubMed:11782438, PubMed:15640796, PubMed:16715078, PubMed:17460120, PubMed:17643123, PubMed:24930965, PubMed:25236177). Multiple DASH complexes oligomerize to form a ring that encircles spindle microtubules and organizes the rod-like NDC80 complexes of the outer kinetochore (PubMed:16715078, PubMed:17460120, PubMed:17643123, PubMed:25236177). DASH complex oligomerization strengthens microtubule attachments (PubMed:25236177). On cytoplasmic microtubules, DASH complexes appear to form patches instead of rings (By similarity).</text>
</comment>
<comment type="interaction">
    <interactant intactId="EBI-26682">
        <id>P35734</id>
    </interactant>
    <interactant intactId="EBI-4192">
        <id>Q00684</id>
        <label>CDC14</label>
    </interactant>
    <organismsDiffer>false</organismsDiffer>
    <experiments>2</experiments>
</comment>
<comment type="interaction">
    <interactant intactId="EBI-26682">
        <id>P35734</id>
    </interactant>
    <interactant intactId="EBI-4515">
        <id>P24869</id>
        <label>CLB2</label>
    </interactant>
    <organismsDiffer>false</organismsDiffer>
    <experiments>2</experiments>
</comment>
<comment type="interaction">
    <interactant intactId="EBI-26682">
        <id>P35734</id>
    </interactant>
    <interactant intactId="EBI-26515">
        <id>P36162</id>
        <label>DAD2</label>
    </interactant>
    <organismsDiffer>false</organismsDiffer>
    <experiments>8</experiments>
</comment>
<comment type="subcellular location">
    <subcellularLocation>
        <location evidence="5 17">Nucleus</location>
    </subcellularLocation>
    <subcellularLocation>
        <location evidence="3 5 13 15 17">Cytoplasm</location>
        <location evidence="3 5 13 15 17">Cytoskeleton</location>
        <location evidence="3 5 13 15 17">Spindle</location>
    </subcellularLocation>
    <subcellularLocation>
        <location evidence="3 5 17">Chromosome</location>
        <location evidence="3 5 17">Centromere</location>
        <location evidence="3 5 17">Kinetochore</location>
    </subcellularLocation>
    <subcellularLocation>
        <location evidence="18">Chromosome</location>
    </subcellularLocation>
    <text evidence="5 13 17 18">Associates with the mitotic spindle and the kinetochore (PubMed:14562095, PubMed:17620411, PubMed:25236177). Localizes to microtubule plus-ends (PubMed:17620411). Associates with origin of replication (ORI) sites during interphase (PubMed:36701236).</text>
</comment>
<comment type="miscellaneous">
    <text evidence="6">Present with 2836 molecules/cell in log phase SD medium.</text>
</comment>
<comment type="similarity">
    <text evidence="19">Belongs to the DASH complex ASK1 family.</text>
</comment>
<evidence type="ECO:0000250" key="1">
    <source>
        <dbReference type="UniProtKB" id="Q9P6S5"/>
    </source>
</evidence>
<evidence type="ECO:0000256" key="2">
    <source>
        <dbReference type="SAM" id="MobiDB-lite"/>
    </source>
</evidence>
<evidence type="ECO:0000269" key="3">
    <source>
    </source>
</evidence>
<evidence type="ECO:0000269" key="4">
    <source>
    </source>
</evidence>
<evidence type="ECO:0000269" key="5">
    <source>
    </source>
</evidence>
<evidence type="ECO:0000269" key="6">
    <source>
    </source>
</evidence>
<evidence type="ECO:0000269" key="7">
    <source>
    </source>
</evidence>
<evidence type="ECO:0000269" key="8">
    <source>
    </source>
</evidence>
<evidence type="ECO:0000269" key="9">
    <source>
    </source>
</evidence>
<evidence type="ECO:0000269" key="10">
    <source>
    </source>
</evidence>
<evidence type="ECO:0000269" key="11">
    <source>
    </source>
</evidence>
<evidence type="ECO:0000269" key="12">
    <source>
    </source>
</evidence>
<evidence type="ECO:0000269" key="13">
    <source>
    </source>
</evidence>
<evidence type="ECO:0000269" key="14">
    <source>
    </source>
</evidence>
<evidence type="ECO:0000269" key="15">
    <source>
    </source>
</evidence>
<evidence type="ECO:0000269" key="16">
    <source>
    </source>
</evidence>
<evidence type="ECO:0000269" key="17">
    <source>
    </source>
</evidence>
<evidence type="ECO:0000269" key="18">
    <source>
    </source>
</evidence>
<evidence type="ECO:0000305" key="19"/>
<evidence type="ECO:0000305" key="20">
    <source>
    </source>
</evidence>
<evidence type="ECO:0007744" key="21">
    <source>
    </source>
</evidence>
<evidence type="ECO:0007744" key="22">
    <source>
    </source>
</evidence>
<evidence type="ECO:0007744" key="23">
    <source>
    </source>
</evidence>
<gene>
    <name type="primary">ASK1</name>
    <name type="ordered locus">YKL052C</name>
    <name type="ORF">YKL306</name>
</gene>
<name>ASK1_YEAST</name>
<keyword id="KW-0002">3D-structure</keyword>
<keyword id="KW-0131">Cell cycle</keyword>
<keyword id="KW-0132">Cell division</keyword>
<keyword id="KW-0137">Centromere</keyword>
<keyword id="KW-0158">Chromosome</keyword>
<keyword id="KW-0159">Chromosome partition</keyword>
<keyword id="KW-0963">Cytoplasm</keyword>
<keyword id="KW-0206">Cytoskeleton</keyword>
<keyword id="KW-0995">Kinetochore</keyword>
<keyword id="KW-0493">Microtubule</keyword>
<keyword id="KW-0498">Mitosis</keyword>
<keyword id="KW-0539">Nucleus</keyword>
<keyword id="KW-0597">Phosphoprotein</keyword>
<keyword id="KW-1185">Reference proteome</keyword>
<reference key="1">
    <citation type="journal article" date="1994" name="Yeast">
        <title>Sequence of a 28.6 kb region of yeast chromosome XI includes the FBA1 and TOA2 genes, an open reading frame (ORF) similar to a translationally controlled tumour protein, one ORF containing motifs also found in plant storage proteins and 13 ORFs with weak or no homology to known proteins.</title>
        <authorList>
            <person name="Rasmussen S.W."/>
        </authorList>
    </citation>
    <scope>NUCLEOTIDE SEQUENCE [GENOMIC DNA]</scope>
    <source>
        <strain>ATCC 204508 / S288c</strain>
    </source>
</reference>
<reference key="2">
    <citation type="journal article" date="1994" name="Nature">
        <title>Complete DNA sequence of yeast chromosome XI.</title>
        <authorList>
            <person name="Dujon B."/>
            <person name="Alexandraki D."/>
            <person name="Andre B."/>
            <person name="Ansorge W."/>
            <person name="Baladron V."/>
            <person name="Ballesta J.P.G."/>
            <person name="Banrevi A."/>
            <person name="Bolle P.-A."/>
            <person name="Bolotin-Fukuhara M."/>
            <person name="Bossier P."/>
            <person name="Bou G."/>
            <person name="Boyer J."/>
            <person name="Buitrago M.J."/>
            <person name="Cheret G."/>
            <person name="Colleaux L."/>
            <person name="Daignan-Fornier B."/>
            <person name="del Rey F."/>
            <person name="Dion C."/>
            <person name="Domdey H."/>
            <person name="Duesterhoeft A."/>
            <person name="Duesterhus S."/>
            <person name="Entian K.-D."/>
            <person name="Erfle H."/>
            <person name="Esteban P.F."/>
            <person name="Feldmann H."/>
            <person name="Fernandes L."/>
            <person name="Fobo G.M."/>
            <person name="Fritz C."/>
            <person name="Fukuhara H."/>
            <person name="Gabel C."/>
            <person name="Gaillon L."/>
            <person name="Garcia-Cantalejo J.M."/>
            <person name="Garcia-Ramirez J.J."/>
            <person name="Gent M.E."/>
            <person name="Ghazvini M."/>
            <person name="Goffeau A."/>
            <person name="Gonzalez A."/>
            <person name="Grothues D."/>
            <person name="Guerreiro P."/>
            <person name="Hegemann J.H."/>
            <person name="Hewitt N."/>
            <person name="Hilger F."/>
            <person name="Hollenberg C.P."/>
            <person name="Horaitis O."/>
            <person name="Indge K.J."/>
            <person name="Jacquier A."/>
            <person name="James C.M."/>
            <person name="Jauniaux J.-C."/>
            <person name="Jimenez A."/>
            <person name="Keuchel H."/>
            <person name="Kirchrath L."/>
            <person name="Kleine K."/>
            <person name="Koetter P."/>
            <person name="Legrain P."/>
            <person name="Liebl S."/>
            <person name="Louis E.J."/>
            <person name="Maia e Silva A."/>
            <person name="Marck C."/>
            <person name="Monnier A.-L."/>
            <person name="Moestl D."/>
            <person name="Mueller S."/>
            <person name="Obermaier B."/>
            <person name="Oliver S.G."/>
            <person name="Pallier C."/>
            <person name="Pascolo S."/>
            <person name="Pfeiffer F."/>
            <person name="Philippsen P."/>
            <person name="Planta R.J."/>
            <person name="Pohl F.M."/>
            <person name="Pohl T.M."/>
            <person name="Poehlmann R."/>
            <person name="Portetelle D."/>
            <person name="Purnelle B."/>
            <person name="Puzos V."/>
            <person name="Ramezani Rad M."/>
            <person name="Rasmussen S.W."/>
            <person name="Remacha M.A."/>
            <person name="Revuelta J.L."/>
            <person name="Richard G.-F."/>
            <person name="Rieger M."/>
            <person name="Rodrigues-Pousada C."/>
            <person name="Rose M."/>
            <person name="Rupp T."/>
            <person name="Santos M.A."/>
            <person name="Schwager C."/>
            <person name="Sensen C."/>
            <person name="Skala J."/>
            <person name="Soares H."/>
            <person name="Sor F."/>
            <person name="Stegemann J."/>
            <person name="Tettelin H."/>
            <person name="Thierry A."/>
            <person name="Tzermia M."/>
            <person name="Urrestarazu L.A."/>
            <person name="van Dyck L."/>
            <person name="van Vliet-Reedijk J.C."/>
            <person name="Valens M."/>
            <person name="Vandenbol M."/>
            <person name="Vilela C."/>
            <person name="Vissers S."/>
            <person name="von Wettstein D."/>
            <person name="Voss H."/>
            <person name="Wiemann S."/>
            <person name="Xu G."/>
            <person name="Zimmermann J."/>
            <person name="Haasemann M."/>
            <person name="Becker I."/>
            <person name="Mewes H.-W."/>
        </authorList>
    </citation>
    <scope>NUCLEOTIDE SEQUENCE [LARGE SCALE GENOMIC DNA]</scope>
    <source>
        <strain>ATCC 204508 / S288c</strain>
    </source>
</reference>
<reference key="3">
    <citation type="journal article" date="2014" name="G3 (Bethesda)">
        <title>The reference genome sequence of Saccharomyces cerevisiae: Then and now.</title>
        <authorList>
            <person name="Engel S.R."/>
            <person name="Dietrich F.S."/>
            <person name="Fisk D.G."/>
            <person name="Binkley G."/>
            <person name="Balakrishnan R."/>
            <person name="Costanzo M.C."/>
            <person name="Dwight S.S."/>
            <person name="Hitz B.C."/>
            <person name="Karra K."/>
            <person name="Nash R.S."/>
            <person name="Weng S."/>
            <person name="Wong E.D."/>
            <person name="Lloyd P."/>
            <person name="Skrzypek M.S."/>
            <person name="Miyasato S.R."/>
            <person name="Simison M."/>
            <person name="Cherry J.M."/>
        </authorList>
    </citation>
    <scope>GENOME REANNOTATION</scope>
    <scope>SEQUENCE REVISION TO 14</scope>
    <source>
        <strain>ATCC 204508 / S288c</strain>
    </source>
</reference>
<reference key="4">
    <citation type="journal article" date="2007" name="Genome Res.">
        <title>Approaching a complete repository of sequence-verified protein-encoding clones for Saccharomyces cerevisiae.</title>
        <authorList>
            <person name="Hu Y."/>
            <person name="Rolfs A."/>
            <person name="Bhullar B."/>
            <person name="Murthy T.V.S."/>
            <person name="Zhu C."/>
            <person name="Berger M.F."/>
            <person name="Camargo A.A."/>
            <person name="Kelley F."/>
            <person name="McCarron S."/>
            <person name="Jepson D."/>
            <person name="Richardson A."/>
            <person name="Raphael J."/>
            <person name="Moreira D."/>
            <person name="Taycher E."/>
            <person name="Zuo D."/>
            <person name="Mohr S."/>
            <person name="Kane M.F."/>
            <person name="Williamson J."/>
            <person name="Simpson A.J.G."/>
            <person name="Bulyk M.L."/>
            <person name="Harlow E."/>
            <person name="Marsischky G."/>
            <person name="Kolodner R.D."/>
            <person name="LaBaer J."/>
        </authorList>
    </citation>
    <scope>NUCLEOTIDE SEQUENCE [GENOMIC DNA]</scope>
    <source>
        <strain>ATCC 204508 / S288c</strain>
    </source>
</reference>
<reference key="5">
    <citation type="journal article" date="2002" name="Genes Dev.">
        <title>The mitotic spindle is required for loading of the DASH complex onto the kinetochore.</title>
        <authorList>
            <person name="Li Y."/>
            <person name="Bachant J.B."/>
            <person name="Alcasabas A.A."/>
            <person name="Wang Y."/>
            <person name="Qin J."/>
            <person name="Elledge S.J."/>
        </authorList>
    </citation>
    <scope>IDENTIFICATION IN THE DASH COMPLEX</scope>
</reference>
<reference key="6">
    <citation type="journal article" date="2002" name="Cell">
        <title>Phospho-regulation of kinetochore-microtubule attachments by the Aurora kinase Ipl1p.</title>
        <authorList>
            <person name="Cheeseman I.M."/>
            <person name="Anderson S."/>
            <person name="Jwa M."/>
            <person name="Green E.M."/>
            <person name="Kang J.-S."/>
            <person name="Yates J.R. III"/>
            <person name="Chan C.S.M."/>
            <person name="Drubin D.G."/>
            <person name="Barnes G."/>
        </authorList>
    </citation>
    <scope>PHOSPHORYLATION AT SER-26; SER-118; SER-134; THR-140; SER-200 AND SER-250</scope>
</reference>
<reference key="7">
    <citation type="journal article" date="2002" name="EMBO J.">
        <title>Four new subunits of the Dam1-Duo1 complex reveal novel functions in sister kinetochore biorientation.</title>
        <authorList>
            <person name="Janke C."/>
            <person name="Ortiz J."/>
            <person name="Tanaka T.U."/>
            <person name="Lechner J."/>
            <person name="Schiebel E."/>
        </authorList>
    </citation>
    <scope>FUNCTION</scope>
    <scope>IDENTIFICATION IN THE DASH COMPLEX</scope>
    <scope>SUBCELLULAR LOCATION</scope>
</reference>
<reference key="8">
    <citation type="journal article" date="2003" name="Cell Cycle">
        <title>The DASH complex component Ask1 is a cell cycle-regulated Cdk substrate in Saccharomyces cerevisiae.</title>
        <authorList>
            <person name="Li Y."/>
            <person name="Elledge S.J."/>
        </authorList>
    </citation>
    <scope>PHOSPHORYLATION BY CDC28</scope>
</reference>
<reference key="9">
    <citation type="journal article" date="2003" name="Mol. Biol. Cell">
        <title>Kinetochore protein interactions and their regulation by the Aurora kinase Ipl1p.</title>
        <authorList>
            <person name="Shang C."/>
            <person name="Hazbun T.R."/>
            <person name="Cheeseman I.M."/>
            <person name="Aranda J."/>
            <person name="Fields S."/>
            <person name="Drubin D.G."/>
            <person name="Barnes G."/>
        </authorList>
    </citation>
    <scope>INTERACTION WITH DAM1</scope>
</reference>
<reference key="10">
    <citation type="journal article" date="2003" name="Nature">
        <title>Global analysis of protein localization in budding yeast.</title>
        <authorList>
            <person name="Huh W.-K."/>
            <person name="Falvo J.V."/>
            <person name="Gerke L.C."/>
            <person name="Carroll A.S."/>
            <person name="Howson R.W."/>
            <person name="Weissman J.S."/>
            <person name="O'Shea E.K."/>
        </authorList>
    </citation>
    <scope>SUBCELLULAR LOCATION [LARGE SCALE ANALYSIS]</scope>
</reference>
<reference key="11">
    <citation type="journal article" date="2003" name="Nature">
        <title>Global analysis of protein expression in yeast.</title>
        <authorList>
            <person name="Ghaemmaghami S."/>
            <person name="Huh W.-K."/>
            <person name="Bower K."/>
            <person name="Howson R.W."/>
            <person name="Belle A."/>
            <person name="Dephoure N."/>
            <person name="O'Shea E.K."/>
            <person name="Weissman J.S."/>
        </authorList>
    </citation>
    <scope>LEVEL OF PROTEIN EXPRESSION [LARGE SCALE ANALYSIS]</scope>
</reference>
<reference key="12">
    <citation type="journal article" date="2005" name="Mol. Cell">
        <title>Formation of a dynamic kinetochore-microtubule interface through assembly of the Dam1 ring complex.</title>
        <authorList>
            <person name="Westermann S."/>
            <person name="Avila-Sakar A."/>
            <person name="Wang H.-W."/>
            <person name="Niederstrasser H."/>
            <person name="Wong J."/>
            <person name="Drubin D.G."/>
            <person name="Nogales E."/>
            <person name="Barnes G."/>
        </authorList>
    </citation>
    <scope>FUNCTION</scope>
</reference>
<reference key="13">
    <citation type="journal article" date="2006" name="Nature">
        <title>The Dam1 kinetochore ring complex moves processively on depolymerizing microtubule ends.</title>
        <authorList>
            <person name="Westermann S."/>
            <person name="Wang H.-W."/>
            <person name="Avila-Sakar A."/>
            <person name="Drubin D.G."/>
            <person name="Nogales E."/>
            <person name="Barnes G."/>
        </authorList>
    </citation>
    <scope>FUNCTION</scope>
</reference>
<reference key="14">
    <citation type="journal article" date="2006" name="Nat. Cell Biol.">
        <title>Molecular architecture of a kinetochore-microtubule attachment site.</title>
        <authorList>
            <person name="Joglekar A.P."/>
            <person name="Bouck D.C."/>
            <person name="Molk J.N."/>
            <person name="Bloom K.S."/>
            <person name="Salmon E.D."/>
        </authorList>
    </citation>
    <scope>SUBUNIT</scope>
</reference>
<reference key="15">
    <citation type="journal article" date="2006" name="Proc. Natl. Acad. Sci. U.S.A.">
        <title>The Dam1 kinetochore complex harnesses microtubule dynamics to produce force and movement.</title>
        <authorList>
            <person name="Asbury C.L."/>
            <person name="Gestaut D.R."/>
            <person name="Powers A.F."/>
            <person name="Franck A.D."/>
            <person name="Davis T.N."/>
        </authorList>
    </citation>
    <scope>FUNCTION</scope>
</reference>
<reference key="16">
    <citation type="journal article" date="2007" name="Genes Dev.">
        <title>Kinetochore microtubule interaction during S phase in Saccharomyces cerevisiae.</title>
        <authorList>
            <person name="Kitamura E."/>
            <person name="Tanaka K."/>
            <person name="Kitamura Y."/>
            <person name="Tanaka T.U."/>
        </authorList>
    </citation>
    <scope>FUNCTION</scope>
    <scope>SUBCELLULAR LOCATION</scope>
</reference>
<reference key="17">
    <citation type="journal article" date="2007" name="J. Cell Biol.">
        <title>Molecular mechanisms of microtubule-dependent kinetochore transport toward spindle poles.</title>
        <authorList>
            <person name="Tanaka K."/>
            <person name="Kitamura E."/>
            <person name="Kitamura Y."/>
            <person name="Tanaka T.U."/>
        </authorList>
    </citation>
    <scope>FUNCTION</scope>
    <scope>SUBCELLULAR LOCATION</scope>
</reference>
<reference key="18">
    <citation type="journal article" date="2007" name="J. Proteome Res.">
        <title>Large-scale phosphorylation analysis of alpha-factor-arrested Saccharomyces cerevisiae.</title>
        <authorList>
            <person name="Li X."/>
            <person name="Gerber S.A."/>
            <person name="Rudner A.D."/>
            <person name="Beausoleil S.A."/>
            <person name="Haas W."/>
            <person name="Villen J."/>
            <person name="Elias J.E."/>
            <person name="Gygi S.P."/>
        </authorList>
    </citation>
    <scope>PHOSPHORYLATION [LARGE SCALE ANALYSIS] AT SER-134; SER-155; SER-156 AND SER-200</scope>
    <scope>IDENTIFICATION BY MASS SPECTROMETRY [LARGE SCALE ANALYSIS]</scope>
    <source>
        <strain>ADR376</strain>
    </source>
</reference>
<reference key="19">
    <citation type="journal article" date="2007" name="Mol. Biol. Cell">
        <title>Protein arms in the kinetochore-microtubule interface of the yeast DASH complex.</title>
        <authorList>
            <person name="Miranda J.J."/>
            <person name="King D.S."/>
            <person name="Harrison S.C."/>
        </authorList>
    </citation>
    <scope>FUNCTION</scope>
    <scope>IDENTIFICATION IN THE DASH COMPLEX</scope>
    <scope>PHOSPHORYLATION AT SER-250</scope>
</reference>
<reference key="20">
    <citation type="journal article" date="2008" name="Mol. Cell. Proteomics">
        <title>A multidimensional chromatography technology for in-depth phosphoproteome analysis.</title>
        <authorList>
            <person name="Albuquerque C.P."/>
            <person name="Smolka M.B."/>
            <person name="Payne S.H."/>
            <person name="Bafna V."/>
            <person name="Eng J."/>
            <person name="Zhou H."/>
        </authorList>
    </citation>
    <scope>PHOSPHORYLATION [LARGE SCALE ANALYSIS] AT SER-26; SER-155; SER-156 AND SER-200</scope>
    <scope>IDENTIFICATION BY MASS SPECTROMETRY [LARGE SCALE ANALYSIS]</scope>
</reference>
<reference key="21">
    <citation type="journal article" date="2009" name="Science">
        <title>Global analysis of Cdk1 substrate phosphorylation sites provides insights into evolution.</title>
        <authorList>
            <person name="Holt L.J."/>
            <person name="Tuch B.B."/>
            <person name="Villen J."/>
            <person name="Johnson A.D."/>
            <person name="Gygi S.P."/>
            <person name="Morgan D.O."/>
        </authorList>
    </citation>
    <scope>PHOSPHORYLATION [LARGE SCALE ANALYSIS] AT SER-134; SER-155; SER-156; SER-200 AND SER-216</scope>
    <scope>IDENTIFICATION BY MASS SPECTROMETRY [LARGE SCALE ANALYSIS]</scope>
</reference>
<reference key="22">
    <citation type="journal article" date="2014" name="Curr. Biol.">
        <title>Assembling the protein architecture of the budding yeast kinetochore-microtubule attachment using FRET.</title>
        <authorList>
            <person name="Aravamudhan P."/>
            <person name="Felzer-Kim I."/>
            <person name="Gurunathan K."/>
            <person name="Joglekar A.P."/>
        </authorList>
    </citation>
    <scope>IDENTIFICATION IN THE DASH COMPLEX</scope>
</reference>
<reference key="23">
    <citation type="journal article" date="2014" name="Nat. Commun.">
        <title>Kinetochores require oligomerization of Dam1 complex to maintain microtubule attachments against tension and promote biorientation.</title>
        <authorList>
            <person name="Umbreit N.T."/>
            <person name="Miller M.P."/>
            <person name="Tien J.F."/>
            <person name="Ortola J.C."/>
            <person name="Gui L."/>
            <person name="Lee K.K."/>
            <person name="Biggins S."/>
            <person name="Asbury C.L."/>
            <person name="Davis T.N."/>
        </authorList>
    </citation>
    <scope>FUNCTION</scope>
    <scope>IDENTIFICATION IN THE DASH COMPLEX</scope>
    <scope>SUBUNIT</scope>
    <scope>SUBCELLULAR LOCATION</scope>
</reference>
<reference key="24">
    <citation type="journal article" date="2023" name="Cell Rep.">
        <title>Single-copy locus proteomics of early- and late-firing DNA replication origins identifies a role of Ask1/DASH complex in replication timing control.</title>
        <authorList>
            <person name="Weibeta M."/>
            <person name="Chanou A."/>
            <person name="Schauer T."/>
            <person name="Tvardovskiy A."/>
            <person name="Meiser S."/>
            <person name="Koenig A.C."/>
            <person name="Schmidt T."/>
            <person name="Kruse E."/>
            <person name="Ummethum H."/>
            <person name="Trauner M."/>
            <person name="Werner M."/>
            <person name="Lalonde M."/>
            <person name="Hauck S.M."/>
            <person name="Scialdone A."/>
            <person name="Hamperl S."/>
        </authorList>
    </citation>
    <scope>FUNCTION</scope>
    <scope>SUBCELLULAR LOCATION</scope>
</reference>
<reference key="25">
    <citation type="journal article" date="2005" name="Nat. Struct. Mol. Biol.">
        <title>The yeast DASH complex forms closed rings on microtubules.</title>
        <authorList>
            <person name="Miranda J.L."/>
            <person name="Wulf P.D."/>
            <person name="Sorger P.K."/>
            <person name="Harrison S.C."/>
        </authorList>
    </citation>
    <scope>ELECTRON MICROSCOPY OF DASH COMPLEX ALONE AND BOUND TO MICROTUBULES</scope>
    <scope>FUNCTION</scope>
    <scope>IDENTIFICATION IN THE DASH COMPLEX</scope>
</reference>
<reference key="26">
    <citation type="journal article" date="2007" name="Nat. Struct. Mol. Biol.">
        <title>Architecture of the Dam1 kinetochore ring complex and implications for microtubule-driven assembly and force-coupling mechanisms.</title>
        <authorList>
            <person name="Wang H.W."/>
            <person name="Ramey V.H."/>
            <person name="Westermann S."/>
            <person name="Leschziner A.E."/>
            <person name="Welburn J.P."/>
            <person name="Nakajima Y."/>
            <person name="Drubin D.G."/>
            <person name="Barnes G."/>
            <person name="Nogales E."/>
        </authorList>
    </citation>
    <scope>ELECTRON MICROSCOPY OF DASH COMPLEX</scope>
    <scope>FUNCTION</scope>
    <scope>IDENTIFICATION IN THE DASH COMPLEX</scope>
    <scope>SUBUNIT</scope>
</reference>
<feature type="chain" id="PRO_0000211317" description="DASH complex subunit ASK1">
    <location>
        <begin position="1"/>
        <end position="292"/>
    </location>
</feature>
<feature type="region of interest" description="Disordered" evidence="2">
    <location>
        <begin position="99"/>
        <end position="118"/>
    </location>
</feature>
<feature type="region of interest" description="Disordered" evidence="2">
    <location>
        <begin position="149"/>
        <end position="194"/>
    </location>
</feature>
<feature type="region of interest" description="Disordered" evidence="2">
    <location>
        <begin position="227"/>
        <end position="292"/>
    </location>
</feature>
<feature type="compositionally biased region" description="Acidic residues" evidence="2">
    <location>
        <begin position="265"/>
        <end position="275"/>
    </location>
</feature>
<feature type="modified residue" description="Phosphoserine" evidence="4 22">
    <location>
        <position position="26"/>
    </location>
</feature>
<feature type="modified residue" description="Phosphoserine" evidence="4">
    <location>
        <position position="118"/>
    </location>
</feature>
<feature type="modified residue" description="Phosphoserine" evidence="4 21 23">
    <location>
        <position position="134"/>
    </location>
</feature>
<feature type="modified residue" description="Phosphothreonine" evidence="4">
    <location>
        <position position="140"/>
    </location>
</feature>
<feature type="modified residue" description="Phosphoserine" evidence="21 22 23">
    <location>
        <position position="155"/>
    </location>
</feature>
<feature type="modified residue" description="Phosphoserine" evidence="21 22 23">
    <location>
        <position position="156"/>
    </location>
</feature>
<feature type="modified residue" description="Phosphoserine; by IPL1" evidence="4 21 22 23">
    <location>
        <position position="200"/>
    </location>
</feature>
<feature type="modified residue" description="Phosphoserine" evidence="23">
    <location>
        <position position="216"/>
    </location>
</feature>
<feature type="modified residue" description="Phosphoserine; by CDC28" evidence="4 20">
    <location>
        <position position="250"/>
    </location>
</feature>
<feature type="sequence conflict" description="In Ref. 1; CAA53419 and 2; CAA81888." evidence="19" ref="1 2">
    <original>D</original>
    <variation>V</variation>
    <location>
        <position position="14"/>
    </location>
</feature>
<dbReference type="EMBL" id="X75781">
    <property type="protein sequence ID" value="CAA53419.1"/>
    <property type="molecule type" value="Genomic_DNA"/>
</dbReference>
<dbReference type="EMBL" id="Z28052">
    <property type="protein sequence ID" value="CAA81888.1"/>
    <property type="molecule type" value="Genomic_DNA"/>
</dbReference>
<dbReference type="EMBL" id="AY692840">
    <property type="protein sequence ID" value="AAT92859.1"/>
    <property type="molecule type" value="Genomic_DNA"/>
</dbReference>
<dbReference type="EMBL" id="BK000645">
    <property type="protein sequence ID" value="DAA01815.1"/>
    <property type="molecule type" value="Genomic_DNA"/>
</dbReference>
<dbReference type="EMBL" id="BK006944">
    <property type="protein sequence ID" value="DAA09105.1"/>
    <property type="molecule type" value="Genomic_DNA"/>
</dbReference>
<dbReference type="PIR" id="S37874">
    <property type="entry name" value="S37874"/>
</dbReference>
<dbReference type="RefSeq" id="NP_012872.2">
    <property type="nucleotide sequence ID" value="NM_001179618.1"/>
</dbReference>
<dbReference type="PDB" id="8Q84">
    <property type="method" value="EM"/>
    <property type="resolution" value="3.15 A"/>
    <property type="chains" value="P/b=1-292"/>
</dbReference>
<dbReference type="PDB" id="8Q85">
    <property type="method" value="EM"/>
    <property type="resolution" value="3.97 A"/>
    <property type="chains" value="b=1-292"/>
</dbReference>
<dbReference type="PDBsum" id="8Q84"/>
<dbReference type="PDBsum" id="8Q85"/>
<dbReference type="EMDB" id="EMD-18246"/>
<dbReference type="EMDB" id="EMD-18247"/>
<dbReference type="SMR" id="P35734"/>
<dbReference type="BioGRID" id="34081">
    <property type="interactions" value="311"/>
</dbReference>
<dbReference type="ComplexPortal" id="CPX-1041">
    <property type="entry name" value="DASH complex"/>
</dbReference>
<dbReference type="DIP" id="DIP-1928N"/>
<dbReference type="FunCoup" id="P35734">
    <property type="interactions" value="112"/>
</dbReference>
<dbReference type="IntAct" id="P35734">
    <property type="interactions" value="20"/>
</dbReference>
<dbReference type="MINT" id="P35734"/>
<dbReference type="STRING" id="4932.YKL052C"/>
<dbReference type="GlyGen" id="P35734">
    <property type="glycosylation" value="1 site"/>
</dbReference>
<dbReference type="iPTMnet" id="P35734"/>
<dbReference type="PaxDb" id="4932-YKL052C"/>
<dbReference type="PeptideAtlas" id="P35734"/>
<dbReference type="EnsemblFungi" id="YKL052C_mRNA">
    <property type="protein sequence ID" value="YKL052C"/>
    <property type="gene ID" value="YKL052C"/>
</dbReference>
<dbReference type="GeneID" id="853814"/>
<dbReference type="KEGG" id="sce:YKL052C"/>
<dbReference type="AGR" id="SGD:S000001535"/>
<dbReference type="SGD" id="S000001535">
    <property type="gene designation" value="ASK1"/>
</dbReference>
<dbReference type="VEuPathDB" id="FungiDB:YKL052C"/>
<dbReference type="eggNOG" id="ENOG502S2V2">
    <property type="taxonomic scope" value="Eukaryota"/>
</dbReference>
<dbReference type="HOGENOM" id="CLU_090087_0_0_1"/>
<dbReference type="InParanoid" id="P35734"/>
<dbReference type="OMA" id="EICERIM"/>
<dbReference type="OrthoDB" id="5573898at2759"/>
<dbReference type="BioCyc" id="YEAST:G3O-31853-MONOMER"/>
<dbReference type="BioGRID-ORCS" id="853814">
    <property type="hits" value="2 hits in 10 CRISPR screens"/>
</dbReference>
<dbReference type="PRO" id="PR:P35734"/>
<dbReference type="Proteomes" id="UP000002311">
    <property type="component" value="Chromosome XI"/>
</dbReference>
<dbReference type="RNAct" id="P35734">
    <property type="molecule type" value="protein"/>
</dbReference>
<dbReference type="GO" id="GO:0005737">
    <property type="term" value="C:cytoplasm"/>
    <property type="evidence" value="ECO:0007669"/>
    <property type="project" value="UniProtKB-KW"/>
</dbReference>
<dbReference type="GO" id="GO:0042729">
    <property type="term" value="C:DASH complex"/>
    <property type="evidence" value="ECO:0000314"/>
    <property type="project" value="SGD"/>
</dbReference>
<dbReference type="GO" id="GO:0005874">
    <property type="term" value="C:microtubule"/>
    <property type="evidence" value="ECO:0007669"/>
    <property type="project" value="UniProtKB-KW"/>
</dbReference>
<dbReference type="GO" id="GO:0072686">
    <property type="term" value="C:mitotic spindle"/>
    <property type="evidence" value="ECO:0000303"/>
    <property type="project" value="ComplexPortal"/>
</dbReference>
<dbReference type="GO" id="GO:0044732">
    <property type="term" value="C:mitotic spindle pole body"/>
    <property type="evidence" value="ECO:0000318"/>
    <property type="project" value="GO_Central"/>
</dbReference>
<dbReference type="GO" id="GO:0051301">
    <property type="term" value="P:cell division"/>
    <property type="evidence" value="ECO:0007669"/>
    <property type="project" value="UniProtKB-KW"/>
</dbReference>
<dbReference type="GO" id="GO:1990758">
    <property type="term" value="P:mitotic sister chromatid biorientation"/>
    <property type="evidence" value="ECO:0000314"/>
    <property type="project" value="ComplexPortal"/>
</dbReference>
<dbReference type="GO" id="GO:0051987">
    <property type="term" value="P:positive regulation of attachment of spindle microtubules to kinetochore"/>
    <property type="evidence" value="ECO:0000314"/>
    <property type="project" value="ComplexPortal"/>
</dbReference>
<dbReference type="GO" id="GO:0031116">
    <property type="term" value="P:positive regulation of microtubule polymerization"/>
    <property type="evidence" value="ECO:0000314"/>
    <property type="project" value="SGD"/>
</dbReference>
<dbReference type="GO" id="GO:1990976">
    <property type="term" value="P:protein transport along microtubule to mitotic spindle pole body"/>
    <property type="evidence" value="ECO:0000315"/>
    <property type="project" value="UniProtKB"/>
</dbReference>
<dbReference type="InterPro" id="IPR013964">
    <property type="entry name" value="DASH_Ask1"/>
</dbReference>
<dbReference type="PANTHER" id="PTHR28200">
    <property type="entry name" value="DASH COMPLEX SUBUNIT ASK1"/>
    <property type="match status" value="1"/>
</dbReference>
<dbReference type="PANTHER" id="PTHR28200:SF1">
    <property type="entry name" value="DASH COMPLEX SUBUNIT ASK1"/>
    <property type="match status" value="1"/>
</dbReference>
<dbReference type="Pfam" id="PF08655">
    <property type="entry name" value="DASH_Ask1"/>
    <property type="match status" value="1"/>
</dbReference>
<accession>P35734</accession>
<accession>D6VXN5</accession>
<accession>Q68EC3</accession>
<accession>Q6B290</accession>
<proteinExistence type="evidence at protein level"/>
<organism>
    <name type="scientific">Saccharomyces cerevisiae (strain ATCC 204508 / S288c)</name>
    <name type="common">Baker's yeast</name>
    <dbReference type="NCBI Taxonomy" id="559292"/>
    <lineage>
        <taxon>Eukaryota</taxon>
        <taxon>Fungi</taxon>
        <taxon>Dikarya</taxon>
        <taxon>Ascomycota</taxon>
        <taxon>Saccharomycotina</taxon>
        <taxon>Saccharomycetes</taxon>
        <taxon>Saccharomycetales</taxon>
        <taxon>Saccharomycetaceae</taxon>
        <taxon>Saccharomyces</taxon>
    </lineage>
</organism>
<sequence length="292" mass="32072">MDSASKEETLEKLDQEITVNLQKIDSNLSFCFHKITQDIIPHVATYSEICERIMDSTEWLGTMFQETGLVNLQANAAAPVGNAPVKSLVSNNVGIFPTSAEEASRQSQTDNGPNEADSAVHVNRDVHSMFNNDSIDDFHTANITSTGQILKLPDSSDEDTGSEAVPSREQTDLTGEGHGGADDEQDESTIQRQSRKRKISLLLQQQYGSSSSMVPSPIVPNKMRKQLAHEEHINNDGDNDDENSNNIESSPLKQGHHHPKGQADDNNEGPDEEESTKEVPKPGTIIHFSTNR</sequence>